<accession>A8GI46</accession>
<protein>
    <recommendedName>
        <fullName evidence="1">SsrA-binding protein</fullName>
    </recommendedName>
    <alternativeName>
        <fullName evidence="1">Small protein B</fullName>
    </alternativeName>
</protein>
<proteinExistence type="inferred from homology"/>
<reference key="1">
    <citation type="submission" date="2007-09" db="EMBL/GenBank/DDBJ databases">
        <title>Complete sequence of chromosome of Serratia proteamaculans 568.</title>
        <authorList>
            <consortium name="US DOE Joint Genome Institute"/>
            <person name="Copeland A."/>
            <person name="Lucas S."/>
            <person name="Lapidus A."/>
            <person name="Barry K."/>
            <person name="Glavina del Rio T."/>
            <person name="Dalin E."/>
            <person name="Tice H."/>
            <person name="Pitluck S."/>
            <person name="Chain P."/>
            <person name="Malfatti S."/>
            <person name="Shin M."/>
            <person name="Vergez L."/>
            <person name="Schmutz J."/>
            <person name="Larimer F."/>
            <person name="Land M."/>
            <person name="Hauser L."/>
            <person name="Kyrpides N."/>
            <person name="Kim E."/>
            <person name="Taghavi S."/>
            <person name="Newman L."/>
            <person name="Vangronsveld J."/>
            <person name="van der Lelie D."/>
            <person name="Richardson P."/>
        </authorList>
    </citation>
    <scope>NUCLEOTIDE SEQUENCE [LARGE SCALE GENOMIC DNA]</scope>
    <source>
        <strain>568</strain>
    </source>
</reference>
<keyword id="KW-0963">Cytoplasm</keyword>
<keyword id="KW-0694">RNA-binding</keyword>
<dbReference type="EMBL" id="CP000826">
    <property type="protein sequence ID" value="ABV42786.1"/>
    <property type="molecule type" value="Genomic_DNA"/>
</dbReference>
<dbReference type="SMR" id="A8GI46"/>
<dbReference type="STRING" id="399741.Spro_3690"/>
<dbReference type="KEGG" id="spe:Spro_3690"/>
<dbReference type="eggNOG" id="COG0691">
    <property type="taxonomic scope" value="Bacteria"/>
</dbReference>
<dbReference type="HOGENOM" id="CLU_108953_3_0_6"/>
<dbReference type="OrthoDB" id="9805462at2"/>
<dbReference type="GO" id="GO:0005829">
    <property type="term" value="C:cytosol"/>
    <property type="evidence" value="ECO:0007669"/>
    <property type="project" value="TreeGrafter"/>
</dbReference>
<dbReference type="GO" id="GO:0003723">
    <property type="term" value="F:RNA binding"/>
    <property type="evidence" value="ECO:0007669"/>
    <property type="project" value="UniProtKB-UniRule"/>
</dbReference>
<dbReference type="GO" id="GO:0070929">
    <property type="term" value="P:trans-translation"/>
    <property type="evidence" value="ECO:0007669"/>
    <property type="project" value="UniProtKB-UniRule"/>
</dbReference>
<dbReference type="CDD" id="cd09294">
    <property type="entry name" value="SmpB"/>
    <property type="match status" value="1"/>
</dbReference>
<dbReference type="Gene3D" id="2.40.280.10">
    <property type="match status" value="1"/>
</dbReference>
<dbReference type="HAMAP" id="MF_00023">
    <property type="entry name" value="SmpB"/>
    <property type="match status" value="1"/>
</dbReference>
<dbReference type="InterPro" id="IPR023620">
    <property type="entry name" value="SmpB"/>
</dbReference>
<dbReference type="InterPro" id="IPR000037">
    <property type="entry name" value="SsrA-bd_prot"/>
</dbReference>
<dbReference type="InterPro" id="IPR020081">
    <property type="entry name" value="SsrA-bd_prot_CS"/>
</dbReference>
<dbReference type="NCBIfam" id="NF003843">
    <property type="entry name" value="PRK05422.1"/>
    <property type="match status" value="1"/>
</dbReference>
<dbReference type="NCBIfam" id="TIGR00086">
    <property type="entry name" value="smpB"/>
    <property type="match status" value="1"/>
</dbReference>
<dbReference type="PANTHER" id="PTHR30308:SF2">
    <property type="entry name" value="SSRA-BINDING PROTEIN"/>
    <property type="match status" value="1"/>
</dbReference>
<dbReference type="PANTHER" id="PTHR30308">
    <property type="entry name" value="TMRNA-BINDING COMPONENT OF TRANS-TRANSLATION TAGGING COMPLEX"/>
    <property type="match status" value="1"/>
</dbReference>
<dbReference type="Pfam" id="PF01668">
    <property type="entry name" value="SmpB"/>
    <property type="match status" value="1"/>
</dbReference>
<dbReference type="SUPFAM" id="SSF74982">
    <property type="entry name" value="Small protein B (SmpB)"/>
    <property type="match status" value="1"/>
</dbReference>
<dbReference type="PROSITE" id="PS01317">
    <property type="entry name" value="SSRP"/>
    <property type="match status" value="1"/>
</dbReference>
<sequence>MTKKKAHKPGSATIAQNKRARFEYAIEEEFEAGLSLQGWEVKSLRAGKANISDSYVTFRDGEAYLFGATVSPLNVASSHVVCDPTRTRKLLLKKRELDSLLGRVNRDGYTVVALSMYWKNAWAKIKIGVAKGKKEHDKRDDIKDREWQTAKSRIMKHANR</sequence>
<comment type="function">
    <text evidence="1">Required for rescue of stalled ribosomes mediated by trans-translation. Binds to transfer-messenger RNA (tmRNA), required for stable association of tmRNA with ribosomes. tmRNA and SmpB together mimic tRNA shape, replacing the anticodon stem-loop with SmpB. tmRNA is encoded by the ssrA gene; the 2 termini fold to resemble tRNA(Ala) and it encodes a 'tag peptide', a short internal open reading frame. During trans-translation Ala-aminoacylated tmRNA acts like a tRNA, entering the A-site of stalled ribosomes, displacing the stalled mRNA. The ribosome then switches to translate the ORF on the tmRNA; the nascent peptide is terminated with the 'tag peptide' encoded by the tmRNA and targeted for degradation. The ribosome is freed to recommence translation, which seems to be the essential function of trans-translation.</text>
</comment>
<comment type="subcellular location">
    <subcellularLocation>
        <location evidence="1">Cytoplasm</location>
    </subcellularLocation>
    <text evidence="1">The tmRNA-SmpB complex associates with stalled 70S ribosomes.</text>
</comment>
<comment type="similarity">
    <text evidence="1">Belongs to the SmpB family.</text>
</comment>
<name>SSRP_SERP5</name>
<gene>
    <name evidence="1" type="primary">smpB</name>
    <name type="ordered locus">Spro_3690</name>
</gene>
<feature type="chain" id="PRO_1000057210" description="SsrA-binding protein">
    <location>
        <begin position="1"/>
        <end position="160"/>
    </location>
</feature>
<feature type="region of interest" description="Disordered" evidence="2">
    <location>
        <begin position="138"/>
        <end position="160"/>
    </location>
</feature>
<feature type="compositionally biased region" description="Basic and acidic residues" evidence="2">
    <location>
        <begin position="138"/>
        <end position="148"/>
    </location>
</feature>
<evidence type="ECO:0000255" key="1">
    <source>
        <dbReference type="HAMAP-Rule" id="MF_00023"/>
    </source>
</evidence>
<evidence type="ECO:0000256" key="2">
    <source>
        <dbReference type="SAM" id="MobiDB-lite"/>
    </source>
</evidence>
<organism>
    <name type="scientific">Serratia proteamaculans (strain 568)</name>
    <dbReference type="NCBI Taxonomy" id="399741"/>
    <lineage>
        <taxon>Bacteria</taxon>
        <taxon>Pseudomonadati</taxon>
        <taxon>Pseudomonadota</taxon>
        <taxon>Gammaproteobacteria</taxon>
        <taxon>Enterobacterales</taxon>
        <taxon>Yersiniaceae</taxon>
        <taxon>Serratia</taxon>
    </lineage>
</organism>